<comment type="function">
    <text evidence="1">One of two assembly initiator proteins, it binds directly to the 5'-end of the 23S rRNA, where it nucleates assembly of the 50S subunit.</text>
</comment>
<comment type="function">
    <text evidence="1">One of the proteins that surrounds the polypeptide exit tunnel on the outside of the subunit.</text>
</comment>
<comment type="subunit">
    <text evidence="1">Part of the 50S ribosomal subunit.</text>
</comment>
<comment type="similarity">
    <text evidence="1">Belongs to the universal ribosomal protein uL24 family.</text>
</comment>
<feature type="chain" id="PRO_0000241678" description="Large ribosomal subunit protein uL24">
    <location>
        <begin position="1"/>
        <end position="101"/>
    </location>
</feature>
<sequence>MKIKKGDEVIVIAGKDKGATGKVKKALPKEQRVIVEGVNLIKKHKKANQAGGQQGEVVTLEAPIHVSNVALLEDGRPTRVGYRFKEDGTKVRISRRTGKEI</sequence>
<name>RL24_THEFY</name>
<keyword id="KW-0687">Ribonucleoprotein</keyword>
<keyword id="KW-0689">Ribosomal protein</keyword>
<keyword id="KW-0694">RNA-binding</keyword>
<keyword id="KW-0699">rRNA-binding</keyword>
<proteinExistence type="inferred from homology"/>
<dbReference type="EMBL" id="CP000088">
    <property type="protein sequence ID" value="AAZ56668.1"/>
    <property type="molecule type" value="Genomic_DNA"/>
</dbReference>
<dbReference type="RefSeq" id="WP_011293058.1">
    <property type="nucleotide sequence ID" value="NC_007333.1"/>
</dbReference>
<dbReference type="SMR" id="Q47LK4"/>
<dbReference type="STRING" id="269800.Tfu_2635"/>
<dbReference type="KEGG" id="tfu:Tfu_2635"/>
<dbReference type="eggNOG" id="COG0198">
    <property type="taxonomic scope" value="Bacteria"/>
</dbReference>
<dbReference type="HOGENOM" id="CLU_093315_2_2_11"/>
<dbReference type="OrthoDB" id="9807419at2"/>
<dbReference type="GO" id="GO:1990904">
    <property type="term" value="C:ribonucleoprotein complex"/>
    <property type="evidence" value="ECO:0007669"/>
    <property type="project" value="UniProtKB-KW"/>
</dbReference>
<dbReference type="GO" id="GO:0005840">
    <property type="term" value="C:ribosome"/>
    <property type="evidence" value="ECO:0007669"/>
    <property type="project" value="UniProtKB-KW"/>
</dbReference>
<dbReference type="GO" id="GO:0019843">
    <property type="term" value="F:rRNA binding"/>
    <property type="evidence" value="ECO:0007669"/>
    <property type="project" value="UniProtKB-UniRule"/>
</dbReference>
<dbReference type="GO" id="GO:0003735">
    <property type="term" value="F:structural constituent of ribosome"/>
    <property type="evidence" value="ECO:0007669"/>
    <property type="project" value="InterPro"/>
</dbReference>
<dbReference type="GO" id="GO:0006412">
    <property type="term" value="P:translation"/>
    <property type="evidence" value="ECO:0007669"/>
    <property type="project" value="UniProtKB-UniRule"/>
</dbReference>
<dbReference type="CDD" id="cd06089">
    <property type="entry name" value="KOW_RPL26"/>
    <property type="match status" value="1"/>
</dbReference>
<dbReference type="FunFam" id="2.30.30.30:FF:000004">
    <property type="entry name" value="50S ribosomal protein L24"/>
    <property type="match status" value="1"/>
</dbReference>
<dbReference type="Gene3D" id="2.30.30.30">
    <property type="match status" value="1"/>
</dbReference>
<dbReference type="HAMAP" id="MF_01326_B">
    <property type="entry name" value="Ribosomal_uL24_B"/>
    <property type="match status" value="1"/>
</dbReference>
<dbReference type="InterPro" id="IPR005824">
    <property type="entry name" value="KOW"/>
</dbReference>
<dbReference type="InterPro" id="IPR014722">
    <property type="entry name" value="Rib_uL2_dom2"/>
</dbReference>
<dbReference type="InterPro" id="IPR003256">
    <property type="entry name" value="Ribosomal_uL24"/>
</dbReference>
<dbReference type="InterPro" id="IPR005825">
    <property type="entry name" value="Ribosomal_uL24_CS"/>
</dbReference>
<dbReference type="InterPro" id="IPR041988">
    <property type="entry name" value="Ribosomal_uL24_KOW"/>
</dbReference>
<dbReference type="InterPro" id="IPR008991">
    <property type="entry name" value="Translation_prot_SH3-like_sf"/>
</dbReference>
<dbReference type="NCBIfam" id="TIGR01079">
    <property type="entry name" value="rplX_bact"/>
    <property type="match status" value="1"/>
</dbReference>
<dbReference type="PANTHER" id="PTHR12903">
    <property type="entry name" value="MITOCHONDRIAL RIBOSOMAL PROTEIN L24"/>
    <property type="match status" value="1"/>
</dbReference>
<dbReference type="Pfam" id="PF00467">
    <property type="entry name" value="KOW"/>
    <property type="match status" value="1"/>
</dbReference>
<dbReference type="Pfam" id="PF17136">
    <property type="entry name" value="ribosomal_L24"/>
    <property type="match status" value="1"/>
</dbReference>
<dbReference type="SMART" id="SM00739">
    <property type="entry name" value="KOW"/>
    <property type="match status" value="1"/>
</dbReference>
<dbReference type="SUPFAM" id="SSF50104">
    <property type="entry name" value="Translation proteins SH3-like domain"/>
    <property type="match status" value="1"/>
</dbReference>
<dbReference type="PROSITE" id="PS01108">
    <property type="entry name" value="RIBOSOMAL_L24"/>
    <property type="match status" value="1"/>
</dbReference>
<reference key="1">
    <citation type="journal article" date="2007" name="J. Bacteriol.">
        <title>Genome sequence and analysis of the soil cellulolytic actinomycete Thermobifida fusca YX.</title>
        <authorList>
            <person name="Lykidis A."/>
            <person name="Mavromatis K."/>
            <person name="Ivanova N."/>
            <person name="Anderson I."/>
            <person name="Land M."/>
            <person name="DiBartolo G."/>
            <person name="Martinez M."/>
            <person name="Lapidus A."/>
            <person name="Lucas S."/>
            <person name="Copeland A."/>
            <person name="Richardson P."/>
            <person name="Wilson D.B."/>
            <person name="Kyrpides N."/>
        </authorList>
    </citation>
    <scope>NUCLEOTIDE SEQUENCE [LARGE SCALE GENOMIC DNA]</scope>
    <source>
        <strain>YX</strain>
    </source>
</reference>
<gene>
    <name evidence="1" type="primary">rplX</name>
    <name type="ordered locus">Tfu_2635</name>
</gene>
<protein>
    <recommendedName>
        <fullName evidence="1">Large ribosomal subunit protein uL24</fullName>
    </recommendedName>
    <alternativeName>
        <fullName evidence="2">50S ribosomal protein L24</fullName>
    </alternativeName>
</protein>
<organism>
    <name type="scientific">Thermobifida fusca (strain YX)</name>
    <dbReference type="NCBI Taxonomy" id="269800"/>
    <lineage>
        <taxon>Bacteria</taxon>
        <taxon>Bacillati</taxon>
        <taxon>Actinomycetota</taxon>
        <taxon>Actinomycetes</taxon>
        <taxon>Streptosporangiales</taxon>
        <taxon>Nocardiopsidaceae</taxon>
        <taxon>Thermobifida</taxon>
    </lineage>
</organism>
<evidence type="ECO:0000255" key="1">
    <source>
        <dbReference type="HAMAP-Rule" id="MF_01326"/>
    </source>
</evidence>
<evidence type="ECO:0000305" key="2"/>
<accession>Q47LK4</accession>